<sequence>MARVIRKKPFVRRRPCQFCLKRQAVTYIDYKNEAELVRLVNMQGKILSSRITGTCARHQRAVALAIKRARYMAILPYIGLIKKDRDEIAQDQQKVEVKKMEESVKSAEPKATAEATEESKPKRTRKAKTE</sequence>
<proteinExistence type="inferred from homology"/>
<feature type="chain" id="PRO_1000119285" description="Small ribosomal subunit protein bS18">
    <location>
        <begin position="1"/>
        <end position="130"/>
    </location>
</feature>
<feature type="region of interest" description="Disordered" evidence="2">
    <location>
        <begin position="98"/>
        <end position="130"/>
    </location>
</feature>
<feature type="compositionally biased region" description="Basic and acidic residues" evidence="2">
    <location>
        <begin position="98"/>
        <end position="108"/>
    </location>
</feature>
<feature type="compositionally biased region" description="Basic and acidic residues" evidence="2">
    <location>
        <begin position="117"/>
        <end position="130"/>
    </location>
</feature>
<protein>
    <recommendedName>
        <fullName evidence="1">Small ribosomal subunit protein bS18</fullName>
    </recommendedName>
    <alternativeName>
        <fullName evidence="3">30S ribosomal protein S18</fullName>
    </alternativeName>
</protein>
<name>RS18_META1</name>
<gene>
    <name evidence="1" type="primary">rpsR</name>
    <name type="ordered locus">MARTH_orf694</name>
</gene>
<organism>
    <name type="scientific">Metamycoplasma arthritidis (strain 158L3-1)</name>
    <name type="common">Mycoplasma arthritidis</name>
    <dbReference type="NCBI Taxonomy" id="243272"/>
    <lineage>
        <taxon>Bacteria</taxon>
        <taxon>Bacillati</taxon>
        <taxon>Mycoplasmatota</taxon>
        <taxon>Mycoplasmoidales</taxon>
        <taxon>Metamycoplasmataceae</taxon>
        <taxon>Metamycoplasma</taxon>
    </lineage>
</organism>
<evidence type="ECO:0000255" key="1">
    <source>
        <dbReference type="HAMAP-Rule" id="MF_00270"/>
    </source>
</evidence>
<evidence type="ECO:0000256" key="2">
    <source>
        <dbReference type="SAM" id="MobiDB-lite"/>
    </source>
</evidence>
<evidence type="ECO:0000305" key="3"/>
<comment type="function">
    <text evidence="1">Binds as a heterodimer with protein bS6 to the central domain of the 16S rRNA, where it helps stabilize the platform of the 30S subunit.</text>
</comment>
<comment type="subunit">
    <text evidence="1">Part of the 30S ribosomal subunit. Forms a tight heterodimer with protein bS6.</text>
</comment>
<comment type="similarity">
    <text evidence="1">Belongs to the bacterial ribosomal protein bS18 family.</text>
</comment>
<reference key="1">
    <citation type="journal article" date="2008" name="Infect. Immun.">
        <title>Genome of Mycoplasma arthritidis.</title>
        <authorList>
            <person name="Dybvig K."/>
            <person name="Zuhua C."/>
            <person name="Lao P."/>
            <person name="Jordan D.S."/>
            <person name="French C.T."/>
            <person name="Tu A.H."/>
            <person name="Loraine A.E."/>
        </authorList>
    </citation>
    <scope>NUCLEOTIDE SEQUENCE [LARGE SCALE GENOMIC DNA]</scope>
    <source>
        <strain>158L3-1</strain>
    </source>
</reference>
<dbReference type="EMBL" id="CP001047">
    <property type="protein sequence ID" value="ACF07460.1"/>
    <property type="molecule type" value="Genomic_DNA"/>
</dbReference>
<dbReference type="SMR" id="B3PN58"/>
<dbReference type="STRING" id="243272.MARTH_orf694"/>
<dbReference type="KEGG" id="mat:MARTH_orf694"/>
<dbReference type="eggNOG" id="COG0238">
    <property type="taxonomic scope" value="Bacteria"/>
</dbReference>
<dbReference type="HOGENOM" id="CLU_148710_2_0_14"/>
<dbReference type="Proteomes" id="UP000008812">
    <property type="component" value="Chromosome"/>
</dbReference>
<dbReference type="GO" id="GO:0022627">
    <property type="term" value="C:cytosolic small ribosomal subunit"/>
    <property type="evidence" value="ECO:0007669"/>
    <property type="project" value="TreeGrafter"/>
</dbReference>
<dbReference type="GO" id="GO:0070181">
    <property type="term" value="F:small ribosomal subunit rRNA binding"/>
    <property type="evidence" value="ECO:0007669"/>
    <property type="project" value="TreeGrafter"/>
</dbReference>
<dbReference type="GO" id="GO:0003735">
    <property type="term" value="F:structural constituent of ribosome"/>
    <property type="evidence" value="ECO:0007669"/>
    <property type="project" value="InterPro"/>
</dbReference>
<dbReference type="GO" id="GO:0006412">
    <property type="term" value="P:translation"/>
    <property type="evidence" value="ECO:0007669"/>
    <property type="project" value="UniProtKB-UniRule"/>
</dbReference>
<dbReference type="Gene3D" id="4.10.640.10">
    <property type="entry name" value="Ribosomal protein S18"/>
    <property type="match status" value="1"/>
</dbReference>
<dbReference type="HAMAP" id="MF_00270">
    <property type="entry name" value="Ribosomal_bS18"/>
    <property type="match status" value="1"/>
</dbReference>
<dbReference type="InterPro" id="IPR001648">
    <property type="entry name" value="Ribosomal_bS18"/>
</dbReference>
<dbReference type="InterPro" id="IPR036870">
    <property type="entry name" value="Ribosomal_bS18_sf"/>
</dbReference>
<dbReference type="NCBIfam" id="TIGR00165">
    <property type="entry name" value="S18"/>
    <property type="match status" value="1"/>
</dbReference>
<dbReference type="PANTHER" id="PTHR13479">
    <property type="entry name" value="30S RIBOSOMAL PROTEIN S18"/>
    <property type="match status" value="1"/>
</dbReference>
<dbReference type="PANTHER" id="PTHR13479:SF40">
    <property type="entry name" value="SMALL RIBOSOMAL SUBUNIT PROTEIN BS18M"/>
    <property type="match status" value="1"/>
</dbReference>
<dbReference type="Pfam" id="PF01084">
    <property type="entry name" value="Ribosomal_S18"/>
    <property type="match status" value="1"/>
</dbReference>
<dbReference type="PRINTS" id="PR00974">
    <property type="entry name" value="RIBOSOMALS18"/>
</dbReference>
<dbReference type="SUPFAM" id="SSF46911">
    <property type="entry name" value="Ribosomal protein S18"/>
    <property type="match status" value="1"/>
</dbReference>
<accession>B3PN58</accession>
<keyword id="KW-1185">Reference proteome</keyword>
<keyword id="KW-0687">Ribonucleoprotein</keyword>
<keyword id="KW-0689">Ribosomal protein</keyword>
<keyword id="KW-0694">RNA-binding</keyword>
<keyword id="KW-0699">rRNA-binding</keyword>